<proteinExistence type="inferred from homology"/>
<gene>
    <name evidence="1" type="primary">ghrA</name>
    <name type="ordered locus">EcSMS35_2100</name>
</gene>
<keyword id="KW-0963">Cytoplasm</keyword>
<keyword id="KW-0520">NAD</keyword>
<keyword id="KW-0521">NADP</keyword>
<keyword id="KW-0560">Oxidoreductase</keyword>
<sequence length="312" mass="35328">MDIIFYHPTFDTQWWIEALRKAIPQARVRAWKSGDNVSADYALVWHPPVEMLAGRDLKAVFALGAGVDSILSKLQAHPEMLKPSVPLFRLEDTGMGEQMQEYAVSQVLHWFRRFDDYRIQQNSSHWQPLPEYHREDFTIGILGAGVLGSKVAQSLQTWRFPLRCWSRTRKSWPGVQSFAGREELSAFLSQCRVLINLLPNTPETVGIINQQLLEKLPDGAYLLNLARGVHVVEDDLLAALDSGKVKGAMLDVFNREPLPPESPLWQHPRVTITPHVAAITRPAEAVDYISRTIAQLEKGERVCGQVDRARGY</sequence>
<protein>
    <recommendedName>
        <fullName evidence="1">Glyoxylate/hydroxypyruvate reductase A</fullName>
        <ecNumber evidence="1">1.1.1.79</ecNumber>
        <ecNumber evidence="1">1.1.1.81</ecNumber>
    </recommendedName>
    <alternativeName>
        <fullName evidence="1">2-ketoacid reductase</fullName>
    </alternativeName>
</protein>
<comment type="function">
    <text evidence="1">Catalyzes the NADPH-dependent reduction of glyoxylate and hydroxypyruvate into glycolate and glycerate, respectively.</text>
</comment>
<comment type="catalytic activity">
    <reaction evidence="1">
        <text>glycolate + NADP(+) = glyoxylate + NADPH + H(+)</text>
        <dbReference type="Rhea" id="RHEA:10992"/>
        <dbReference type="ChEBI" id="CHEBI:15378"/>
        <dbReference type="ChEBI" id="CHEBI:29805"/>
        <dbReference type="ChEBI" id="CHEBI:36655"/>
        <dbReference type="ChEBI" id="CHEBI:57783"/>
        <dbReference type="ChEBI" id="CHEBI:58349"/>
        <dbReference type="EC" id="1.1.1.79"/>
    </reaction>
</comment>
<comment type="catalytic activity">
    <reaction evidence="1">
        <text>(R)-glycerate + NAD(+) = 3-hydroxypyruvate + NADH + H(+)</text>
        <dbReference type="Rhea" id="RHEA:17905"/>
        <dbReference type="ChEBI" id="CHEBI:15378"/>
        <dbReference type="ChEBI" id="CHEBI:16659"/>
        <dbReference type="ChEBI" id="CHEBI:17180"/>
        <dbReference type="ChEBI" id="CHEBI:57540"/>
        <dbReference type="ChEBI" id="CHEBI:57945"/>
        <dbReference type="EC" id="1.1.1.81"/>
    </reaction>
</comment>
<comment type="catalytic activity">
    <reaction evidence="1">
        <text>(R)-glycerate + NADP(+) = 3-hydroxypyruvate + NADPH + H(+)</text>
        <dbReference type="Rhea" id="RHEA:18657"/>
        <dbReference type="ChEBI" id="CHEBI:15378"/>
        <dbReference type="ChEBI" id="CHEBI:16659"/>
        <dbReference type="ChEBI" id="CHEBI:17180"/>
        <dbReference type="ChEBI" id="CHEBI:57783"/>
        <dbReference type="ChEBI" id="CHEBI:58349"/>
        <dbReference type="EC" id="1.1.1.81"/>
    </reaction>
</comment>
<comment type="subcellular location">
    <subcellularLocation>
        <location evidence="1">Cytoplasm</location>
    </subcellularLocation>
</comment>
<comment type="similarity">
    <text evidence="1">Belongs to the D-isomer specific 2-hydroxyacid dehydrogenase family. GhrA subfamily.</text>
</comment>
<organism>
    <name type="scientific">Escherichia coli (strain SMS-3-5 / SECEC)</name>
    <dbReference type="NCBI Taxonomy" id="439855"/>
    <lineage>
        <taxon>Bacteria</taxon>
        <taxon>Pseudomonadati</taxon>
        <taxon>Pseudomonadota</taxon>
        <taxon>Gammaproteobacteria</taxon>
        <taxon>Enterobacterales</taxon>
        <taxon>Enterobacteriaceae</taxon>
        <taxon>Escherichia</taxon>
    </lineage>
</organism>
<accession>B1LIY1</accession>
<feature type="chain" id="PRO_0000348361" description="Glyoxylate/hydroxypyruvate reductase A">
    <location>
        <begin position="1"/>
        <end position="312"/>
    </location>
</feature>
<feature type="active site" evidence="1">
    <location>
        <position position="227"/>
    </location>
</feature>
<feature type="active site" description="Proton donor" evidence="1">
    <location>
        <position position="275"/>
    </location>
</feature>
<reference key="1">
    <citation type="journal article" date="2008" name="J. Bacteriol.">
        <title>Insights into the environmental resistance gene pool from the genome sequence of the multidrug-resistant environmental isolate Escherichia coli SMS-3-5.</title>
        <authorList>
            <person name="Fricke W.F."/>
            <person name="Wright M.S."/>
            <person name="Lindell A.H."/>
            <person name="Harkins D.M."/>
            <person name="Baker-Austin C."/>
            <person name="Ravel J."/>
            <person name="Stepanauskas R."/>
        </authorList>
    </citation>
    <scope>NUCLEOTIDE SEQUENCE [LARGE SCALE GENOMIC DNA]</scope>
    <source>
        <strain>SMS-3-5 / SECEC</strain>
    </source>
</reference>
<evidence type="ECO:0000255" key="1">
    <source>
        <dbReference type="HAMAP-Rule" id="MF_01666"/>
    </source>
</evidence>
<dbReference type="EC" id="1.1.1.79" evidence="1"/>
<dbReference type="EC" id="1.1.1.81" evidence="1"/>
<dbReference type="EMBL" id="CP000970">
    <property type="protein sequence ID" value="ACB18295.1"/>
    <property type="molecule type" value="Genomic_DNA"/>
</dbReference>
<dbReference type="RefSeq" id="WP_000351331.1">
    <property type="nucleotide sequence ID" value="NC_010498.1"/>
</dbReference>
<dbReference type="SMR" id="B1LIY1"/>
<dbReference type="KEGG" id="ecm:EcSMS35_2100"/>
<dbReference type="HOGENOM" id="CLU_019796_1_0_6"/>
<dbReference type="Proteomes" id="UP000007011">
    <property type="component" value="Chromosome"/>
</dbReference>
<dbReference type="GO" id="GO:0005829">
    <property type="term" value="C:cytosol"/>
    <property type="evidence" value="ECO:0007669"/>
    <property type="project" value="UniProtKB-ARBA"/>
</dbReference>
<dbReference type="GO" id="GO:0030267">
    <property type="term" value="F:glyoxylate reductase (NADPH) activity"/>
    <property type="evidence" value="ECO:0007669"/>
    <property type="project" value="UniProtKB-UniRule"/>
</dbReference>
<dbReference type="GO" id="GO:0008465">
    <property type="term" value="F:hydroxypyruvate reductase (NADH) activity"/>
    <property type="evidence" value="ECO:0007669"/>
    <property type="project" value="RHEA"/>
</dbReference>
<dbReference type="GO" id="GO:0120509">
    <property type="term" value="F:hydroxypyruvate reductase (NADPH) activity"/>
    <property type="evidence" value="ECO:0007669"/>
    <property type="project" value="RHEA"/>
</dbReference>
<dbReference type="GO" id="GO:0051287">
    <property type="term" value="F:NAD binding"/>
    <property type="evidence" value="ECO:0007669"/>
    <property type="project" value="InterPro"/>
</dbReference>
<dbReference type="CDD" id="cd12164">
    <property type="entry name" value="GDH_like_2"/>
    <property type="match status" value="1"/>
</dbReference>
<dbReference type="FunFam" id="3.40.50.720:FF:000110">
    <property type="entry name" value="Glyoxylate/hydroxypyruvate reductase A"/>
    <property type="match status" value="1"/>
</dbReference>
<dbReference type="Gene3D" id="3.40.50.720">
    <property type="entry name" value="NAD(P)-binding Rossmann-like Domain"/>
    <property type="match status" value="2"/>
</dbReference>
<dbReference type="HAMAP" id="MF_01666">
    <property type="entry name" value="2_Hacid_dh_C_GhrA"/>
    <property type="match status" value="1"/>
</dbReference>
<dbReference type="InterPro" id="IPR029753">
    <property type="entry name" value="D-isomer_DH_CS"/>
</dbReference>
<dbReference type="InterPro" id="IPR006140">
    <property type="entry name" value="D-isomer_DH_NAD-bd"/>
</dbReference>
<dbReference type="InterPro" id="IPR023514">
    <property type="entry name" value="GhrA_Enterobacterales"/>
</dbReference>
<dbReference type="InterPro" id="IPR036291">
    <property type="entry name" value="NAD(P)-bd_dom_sf"/>
</dbReference>
<dbReference type="NCBIfam" id="NF012013">
    <property type="entry name" value="PRK15469.1"/>
    <property type="match status" value="1"/>
</dbReference>
<dbReference type="PANTHER" id="PTHR43333">
    <property type="entry name" value="2-HACID_DH_C DOMAIN-CONTAINING PROTEIN"/>
    <property type="match status" value="1"/>
</dbReference>
<dbReference type="PANTHER" id="PTHR43333:SF1">
    <property type="entry name" value="D-ISOMER SPECIFIC 2-HYDROXYACID DEHYDROGENASE NAD-BINDING DOMAIN-CONTAINING PROTEIN"/>
    <property type="match status" value="1"/>
</dbReference>
<dbReference type="Pfam" id="PF02826">
    <property type="entry name" value="2-Hacid_dh_C"/>
    <property type="match status" value="1"/>
</dbReference>
<dbReference type="SUPFAM" id="SSF51735">
    <property type="entry name" value="NAD(P)-binding Rossmann-fold domains"/>
    <property type="match status" value="1"/>
</dbReference>
<dbReference type="PROSITE" id="PS00671">
    <property type="entry name" value="D_2_HYDROXYACID_DH_3"/>
    <property type="match status" value="1"/>
</dbReference>
<name>GHRA_ECOSM</name>